<dbReference type="EC" id="4.2.1.20" evidence="1"/>
<dbReference type="EMBL" id="CP000076">
    <property type="protein sequence ID" value="AAY95454.1"/>
    <property type="molecule type" value="Genomic_DNA"/>
</dbReference>
<dbReference type="RefSeq" id="WP_011058425.1">
    <property type="nucleotide sequence ID" value="NC_004129.6"/>
</dbReference>
<dbReference type="SMR" id="Q4KKP5"/>
<dbReference type="STRING" id="220664.PFL_0036"/>
<dbReference type="KEGG" id="pfl:PFL_0036"/>
<dbReference type="PATRIC" id="fig|220664.5.peg.37"/>
<dbReference type="eggNOG" id="COG0159">
    <property type="taxonomic scope" value="Bacteria"/>
</dbReference>
<dbReference type="HOGENOM" id="CLU_016734_0_0_6"/>
<dbReference type="UniPathway" id="UPA00035">
    <property type="reaction ID" value="UER00044"/>
</dbReference>
<dbReference type="Proteomes" id="UP000008540">
    <property type="component" value="Chromosome"/>
</dbReference>
<dbReference type="GO" id="GO:0005829">
    <property type="term" value="C:cytosol"/>
    <property type="evidence" value="ECO:0007669"/>
    <property type="project" value="TreeGrafter"/>
</dbReference>
<dbReference type="GO" id="GO:0004834">
    <property type="term" value="F:tryptophan synthase activity"/>
    <property type="evidence" value="ECO:0007669"/>
    <property type="project" value="UniProtKB-UniRule"/>
</dbReference>
<dbReference type="CDD" id="cd04724">
    <property type="entry name" value="Tryptophan_synthase_alpha"/>
    <property type="match status" value="1"/>
</dbReference>
<dbReference type="FunFam" id="3.20.20.70:FF:000037">
    <property type="entry name" value="Tryptophan synthase alpha chain"/>
    <property type="match status" value="1"/>
</dbReference>
<dbReference type="Gene3D" id="3.20.20.70">
    <property type="entry name" value="Aldolase class I"/>
    <property type="match status" value="1"/>
</dbReference>
<dbReference type="HAMAP" id="MF_00131">
    <property type="entry name" value="Trp_synth_alpha"/>
    <property type="match status" value="1"/>
</dbReference>
<dbReference type="InterPro" id="IPR013785">
    <property type="entry name" value="Aldolase_TIM"/>
</dbReference>
<dbReference type="InterPro" id="IPR011060">
    <property type="entry name" value="RibuloseP-bd_barrel"/>
</dbReference>
<dbReference type="InterPro" id="IPR018204">
    <property type="entry name" value="Trp_synthase_alpha_AS"/>
</dbReference>
<dbReference type="InterPro" id="IPR002028">
    <property type="entry name" value="Trp_synthase_suA"/>
</dbReference>
<dbReference type="NCBIfam" id="TIGR00262">
    <property type="entry name" value="trpA"/>
    <property type="match status" value="1"/>
</dbReference>
<dbReference type="PANTHER" id="PTHR43406:SF1">
    <property type="entry name" value="TRYPTOPHAN SYNTHASE ALPHA CHAIN, CHLOROPLASTIC"/>
    <property type="match status" value="1"/>
</dbReference>
<dbReference type="PANTHER" id="PTHR43406">
    <property type="entry name" value="TRYPTOPHAN SYNTHASE, ALPHA CHAIN"/>
    <property type="match status" value="1"/>
</dbReference>
<dbReference type="Pfam" id="PF00290">
    <property type="entry name" value="Trp_syntA"/>
    <property type="match status" value="1"/>
</dbReference>
<dbReference type="SUPFAM" id="SSF51366">
    <property type="entry name" value="Ribulose-phoshate binding barrel"/>
    <property type="match status" value="1"/>
</dbReference>
<dbReference type="PROSITE" id="PS00167">
    <property type="entry name" value="TRP_SYNTHASE_ALPHA"/>
    <property type="match status" value="1"/>
</dbReference>
<feature type="chain" id="PRO_1000018255" description="Tryptophan synthase alpha chain">
    <location>
        <begin position="1"/>
        <end position="270"/>
    </location>
</feature>
<feature type="active site" description="Proton acceptor" evidence="1">
    <location>
        <position position="49"/>
    </location>
</feature>
<feature type="active site" description="Proton acceptor" evidence="1">
    <location>
        <position position="60"/>
    </location>
</feature>
<gene>
    <name evidence="1" type="primary">trpA</name>
    <name type="ordered locus">PFL_0036</name>
</gene>
<proteinExistence type="inferred from homology"/>
<keyword id="KW-0028">Amino-acid biosynthesis</keyword>
<keyword id="KW-0057">Aromatic amino acid biosynthesis</keyword>
<keyword id="KW-0456">Lyase</keyword>
<keyword id="KW-0822">Tryptophan biosynthesis</keyword>
<comment type="function">
    <text evidence="1">The alpha subunit is responsible for the aldol cleavage of indoleglycerol phosphate to indole and glyceraldehyde 3-phosphate.</text>
</comment>
<comment type="catalytic activity">
    <reaction evidence="1">
        <text>(1S,2R)-1-C-(indol-3-yl)glycerol 3-phosphate + L-serine = D-glyceraldehyde 3-phosphate + L-tryptophan + H2O</text>
        <dbReference type="Rhea" id="RHEA:10532"/>
        <dbReference type="ChEBI" id="CHEBI:15377"/>
        <dbReference type="ChEBI" id="CHEBI:33384"/>
        <dbReference type="ChEBI" id="CHEBI:57912"/>
        <dbReference type="ChEBI" id="CHEBI:58866"/>
        <dbReference type="ChEBI" id="CHEBI:59776"/>
        <dbReference type="EC" id="4.2.1.20"/>
    </reaction>
</comment>
<comment type="pathway">
    <text evidence="1">Amino-acid biosynthesis; L-tryptophan biosynthesis; L-tryptophan from chorismate: step 5/5.</text>
</comment>
<comment type="subunit">
    <text evidence="1">Tetramer of two alpha and two beta chains.</text>
</comment>
<comment type="similarity">
    <text evidence="1">Belongs to the TrpA family.</text>
</comment>
<evidence type="ECO:0000255" key="1">
    <source>
        <dbReference type="HAMAP-Rule" id="MF_00131"/>
    </source>
</evidence>
<sequence>MSRLQTRFAQLKEQNRAALVTFVTAGDPNYDTSLAILKGLPAAGADVIELGMPFTDPMADGPAIQLANIRALGAKQNLAKTLQMVREFREGNSDTPLVLMGYFNPIHHYGVPRFIADAKAAGVDGLIVVDMPPEHNSELCDPAQAAGIDFIRLTTPTTDDARLPKVLDGSSGFVYYVSVAGVTGAGAATLEHVEEAVARLRRHTDLPISIGFGIRTPEQAAAIARLADGVVVGSALIDHIASAESSEQAVDGVLSLCAALSEGVRKARVS</sequence>
<organism>
    <name type="scientific">Pseudomonas fluorescens (strain ATCC BAA-477 / NRRL B-23932 / Pf-5)</name>
    <dbReference type="NCBI Taxonomy" id="220664"/>
    <lineage>
        <taxon>Bacteria</taxon>
        <taxon>Pseudomonadati</taxon>
        <taxon>Pseudomonadota</taxon>
        <taxon>Gammaproteobacteria</taxon>
        <taxon>Pseudomonadales</taxon>
        <taxon>Pseudomonadaceae</taxon>
        <taxon>Pseudomonas</taxon>
    </lineage>
</organism>
<name>TRPA_PSEF5</name>
<accession>Q4KKP5</accession>
<reference key="1">
    <citation type="journal article" date="2005" name="Nat. Biotechnol.">
        <title>Complete genome sequence of the plant commensal Pseudomonas fluorescens Pf-5.</title>
        <authorList>
            <person name="Paulsen I.T."/>
            <person name="Press C.M."/>
            <person name="Ravel J."/>
            <person name="Kobayashi D.Y."/>
            <person name="Myers G.S.A."/>
            <person name="Mavrodi D.V."/>
            <person name="DeBoy R.T."/>
            <person name="Seshadri R."/>
            <person name="Ren Q."/>
            <person name="Madupu R."/>
            <person name="Dodson R.J."/>
            <person name="Durkin A.S."/>
            <person name="Brinkac L.M."/>
            <person name="Daugherty S.C."/>
            <person name="Sullivan S.A."/>
            <person name="Rosovitz M.J."/>
            <person name="Gwinn M.L."/>
            <person name="Zhou L."/>
            <person name="Schneider D.J."/>
            <person name="Cartinhour S.W."/>
            <person name="Nelson W.C."/>
            <person name="Weidman J."/>
            <person name="Watkins K."/>
            <person name="Tran K."/>
            <person name="Khouri H."/>
            <person name="Pierson E.A."/>
            <person name="Pierson L.S. III"/>
            <person name="Thomashow L.S."/>
            <person name="Loper J.E."/>
        </authorList>
    </citation>
    <scope>NUCLEOTIDE SEQUENCE [LARGE SCALE GENOMIC DNA]</scope>
    <source>
        <strain>ATCC BAA-477 / NRRL B-23932 / Pf-5</strain>
    </source>
</reference>
<protein>
    <recommendedName>
        <fullName evidence="1">Tryptophan synthase alpha chain</fullName>
        <ecNumber evidence="1">4.2.1.20</ecNumber>
    </recommendedName>
</protein>